<sequence length="496" mass="55439">MPQLHDSGSRAIQPSDQTHQHDFARIFGIETEYGVSVTDIPEPMDASHVAMTMFQPVVRRARSTNTYVENGSRLYLDVGSHPEYATAEAICPSDALLSDLAGEQTMRSMGLDAQRRLRESDAQNRHATLHLYKNNADSAGHSFGCHENYLVRRFVNLDMIQHVLLPFLITRQIYTGAGRFDGERLLFTQRAAFVDETVSSATTRSRPMINTRDEPHANPDDYRRLHVIIGDSNRSQWATLMKCATTHLVLCMMEHAARSGCETELEAFALADPIAANHAINTDGAHARIALAAGRSTTALELQQMMLEQVESFAAHHGDALEASLRYDALCNVEWIVGQWRWVLDRLAANDIETLSHVVDWASKQVFFNRLQSRGTVTPARLRQLDLDYHDIANGRLYPSLCAHGLMRTLVDADQIHDAVSTPPPHTRAVLRGRFVAAASHTDAVYDCDWTTLKLVRPVHMEAVLLDPFHDEPTKQYDKLMGELGDARADGDEAPV</sequence>
<keyword id="KW-0067">ATP-binding</keyword>
<keyword id="KW-0436">Ligase</keyword>
<keyword id="KW-0460">Magnesium</keyword>
<keyword id="KW-0479">Metal-binding</keyword>
<keyword id="KW-0547">Nucleotide-binding</keyword>
<keyword id="KW-1185">Reference proteome</keyword>
<keyword id="KW-0833">Ubl conjugation pathway</keyword>
<name>PAFA_BIFA0</name>
<evidence type="ECO:0000255" key="1">
    <source>
        <dbReference type="HAMAP-Rule" id="MF_02111"/>
    </source>
</evidence>
<accession>B8DTX8</accession>
<comment type="function">
    <text evidence="1">Catalyzes the covalent attachment of the prokaryotic ubiquitin-like protein modifier Pup to the proteasomal substrate proteins, thereby targeting them for proteasomal degradation. This tagging system is termed pupylation. The ligation reaction involves the side-chain carboxylate of the C-terminal glutamate of Pup and the side-chain amino group of a substrate lysine.</text>
</comment>
<comment type="catalytic activity">
    <reaction evidence="1">
        <text>ATP + [prokaryotic ubiquitin-like protein]-L-glutamate + [protein]-L-lysine = ADP + phosphate + N(6)-([prokaryotic ubiquitin-like protein]-gamma-L-glutamyl)-[protein]-L-lysine.</text>
        <dbReference type="EC" id="6.3.1.19"/>
    </reaction>
</comment>
<comment type="pathway">
    <text evidence="1">Protein degradation; proteasomal Pup-dependent pathway.</text>
</comment>
<comment type="pathway">
    <text evidence="1">Protein modification; protein pupylation.</text>
</comment>
<comment type="miscellaneous">
    <text evidence="1">The reaction mechanism probably proceeds via the activation of Pup by phosphorylation of its C-terminal glutamate, which is then subject to nucleophilic attack by the substrate lysine, resulting in an isopeptide bond and the release of phosphate as a good leaving group.</text>
</comment>
<comment type="similarity">
    <text evidence="1">Belongs to the Pup ligase/Pup deamidase family. Pup-conjugating enzyme subfamily.</text>
</comment>
<protein>
    <recommendedName>
        <fullName evidence="1">Pup--protein ligase</fullName>
        <ecNumber evidence="1">6.3.1.19</ecNumber>
    </recommendedName>
    <alternativeName>
        <fullName evidence="1">Proteasome accessory factor A</fullName>
    </alternativeName>
    <alternativeName>
        <fullName evidence="1">Pup-conjugating enzyme</fullName>
    </alternativeName>
</protein>
<proteinExistence type="inferred from homology"/>
<dbReference type="EC" id="6.3.1.19" evidence="1"/>
<dbReference type="EMBL" id="CP001213">
    <property type="protein sequence ID" value="ACL29457.1"/>
    <property type="molecule type" value="Genomic_DNA"/>
</dbReference>
<dbReference type="RefSeq" id="WP_004218911.1">
    <property type="nucleotide sequence ID" value="NC_011835.1"/>
</dbReference>
<dbReference type="SMR" id="B8DTX8"/>
<dbReference type="STRING" id="442563.BLA_1169"/>
<dbReference type="KEGG" id="bla:BLA_1169"/>
<dbReference type="HOGENOM" id="CLU_040524_0_1_11"/>
<dbReference type="UniPathway" id="UPA00997"/>
<dbReference type="UniPathway" id="UPA00998"/>
<dbReference type="Proteomes" id="UP000002456">
    <property type="component" value="Chromosome"/>
</dbReference>
<dbReference type="GO" id="GO:0005524">
    <property type="term" value="F:ATP binding"/>
    <property type="evidence" value="ECO:0007669"/>
    <property type="project" value="UniProtKB-UniRule"/>
</dbReference>
<dbReference type="GO" id="GO:0016879">
    <property type="term" value="F:ligase activity, forming carbon-nitrogen bonds"/>
    <property type="evidence" value="ECO:0007669"/>
    <property type="project" value="InterPro"/>
</dbReference>
<dbReference type="GO" id="GO:0000287">
    <property type="term" value="F:magnesium ion binding"/>
    <property type="evidence" value="ECO:0007669"/>
    <property type="project" value="UniProtKB-UniRule"/>
</dbReference>
<dbReference type="GO" id="GO:0019787">
    <property type="term" value="F:ubiquitin-like protein transferase activity"/>
    <property type="evidence" value="ECO:0007669"/>
    <property type="project" value="UniProtKB-UniRule"/>
</dbReference>
<dbReference type="GO" id="GO:0019941">
    <property type="term" value="P:modification-dependent protein catabolic process"/>
    <property type="evidence" value="ECO:0007669"/>
    <property type="project" value="UniProtKB-UniRule"/>
</dbReference>
<dbReference type="GO" id="GO:0010498">
    <property type="term" value="P:proteasomal protein catabolic process"/>
    <property type="evidence" value="ECO:0007669"/>
    <property type="project" value="UniProtKB-UniRule"/>
</dbReference>
<dbReference type="GO" id="GO:0070490">
    <property type="term" value="P:protein pupylation"/>
    <property type="evidence" value="ECO:0007669"/>
    <property type="project" value="UniProtKB-UniRule"/>
</dbReference>
<dbReference type="HAMAP" id="MF_02111">
    <property type="entry name" value="Pup_ligase"/>
    <property type="match status" value="1"/>
</dbReference>
<dbReference type="InterPro" id="IPR022279">
    <property type="entry name" value="Pup_ligase"/>
</dbReference>
<dbReference type="InterPro" id="IPR004347">
    <property type="entry name" value="Pup_ligase/deamidase"/>
</dbReference>
<dbReference type="PANTHER" id="PTHR42307">
    <property type="entry name" value="PUP DEAMIDASE/DEPUPYLASE"/>
    <property type="match status" value="1"/>
</dbReference>
<dbReference type="PANTHER" id="PTHR42307:SF3">
    <property type="entry name" value="PUP--PROTEIN LIGASE"/>
    <property type="match status" value="1"/>
</dbReference>
<dbReference type="Pfam" id="PF03136">
    <property type="entry name" value="Pup_ligase"/>
    <property type="match status" value="1"/>
</dbReference>
<gene>
    <name evidence="1" type="primary">pafA</name>
    <name type="ordered locus">BLA_1169</name>
</gene>
<reference key="1">
    <citation type="journal article" date="2009" name="J. Bacteriol.">
        <title>Genome sequence of the probiotic bacterium Bifidobacterium animalis subsp. lactis AD011.</title>
        <authorList>
            <person name="Kim J.F."/>
            <person name="Jeong H."/>
            <person name="Yu D.S."/>
            <person name="Choi S.-H."/>
            <person name="Hur C.-G."/>
            <person name="Park M.-S."/>
            <person name="Yoon S.H."/>
            <person name="Kim D.-W."/>
            <person name="Ji G.E."/>
            <person name="Park H.-S."/>
            <person name="Oh T.K."/>
        </authorList>
    </citation>
    <scope>NUCLEOTIDE SEQUENCE [LARGE SCALE GENOMIC DNA]</scope>
    <source>
        <strain>AD011</strain>
    </source>
</reference>
<organism>
    <name type="scientific">Bifidobacterium animalis subsp. lactis (strain AD011)</name>
    <dbReference type="NCBI Taxonomy" id="442563"/>
    <lineage>
        <taxon>Bacteria</taxon>
        <taxon>Bacillati</taxon>
        <taxon>Actinomycetota</taxon>
        <taxon>Actinomycetes</taxon>
        <taxon>Bifidobacteriales</taxon>
        <taxon>Bifidobacteriaceae</taxon>
        <taxon>Bifidobacterium</taxon>
    </lineage>
</organism>
<feature type="chain" id="PRO_0000395896" description="Pup--protein ligase">
    <location>
        <begin position="1"/>
        <end position="496"/>
    </location>
</feature>
<feature type="active site" description="Proton acceptor" evidence="1">
    <location>
        <position position="77"/>
    </location>
</feature>
<feature type="binding site" evidence="1">
    <location>
        <position position="30"/>
    </location>
    <ligand>
        <name>Mg(2+)</name>
        <dbReference type="ChEBI" id="CHEBI:18420"/>
    </ligand>
</feature>
<feature type="binding site" evidence="1">
    <location>
        <position position="73"/>
    </location>
    <ligand>
        <name>ATP</name>
        <dbReference type="ChEBI" id="CHEBI:30616"/>
    </ligand>
</feature>
<feature type="binding site" evidence="1">
    <location>
        <position position="75"/>
    </location>
    <ligand>
        <name>Mg(2+)</name>
        <dbReference type="ChEBI" id="CHEBI:18420"/>
    </ligand>
</feature>
<feature type="binding site" evidence="1">
    <location>
        <position position="83"/>
    </location>
    <ligand>
        <name>Mg(2+)</name>
        <dbReference type="ChEBI" id="CHEBI:18420"/>
    </ligand>
</feature>
<feature type="binding site" evidence="1">
    <location>
        <position position="86"/>
    </location>
    <ligand>
        <name>ATP</name>
        <dbReference type="ChEBI" id="CHEBI:30616"/>
    </ligand>
</feature>
<feature type="binding site" evidence="1">
    <location>
        <position position="450"/>
    </location>
    <ligand>
        <name>ATP</name>
        <dbReference type="ChEBI" id="CHEBI:30616"/>
    </ligand>
</feature>